<evidence type="ECO:0000255" key="1">
    <source>
        <dbReference type="PROSITE-ProRule" id="PRU00117"/>
    </source>
</evidence>
<evidence type="ECO:0000255" key="2">
    <source>
        <dbReference type="PROSITE-ProRule" id="PRU00723"/>
    </source>
</evidence>
<evidence type="ECO:0000256" key="3">
    <source>
        <dbReference type="SAM" id="MobiDB-lite"/>
    </source>
</evidence>
<evidence type="ECO:0000305" key="4"/>
<reference key="1">
    <citation type="journal article" date="2000" name="DNA Res.">
        <title>Structural analysis of Arabidopsis thaliana chromosome 3. II. Sequence features of the 4,251,695 bp regions covered by 90 P1, TAC and BAC clones.</title>
        <authorList>
            <person name="Kaneko T."/>
            <person name="Katoh T."/>
            <person name="Sato S."/>
            <person name="Nakamura Y."/>
            <person name="Asamizu E."/>
            <person name="Tabata S."/>
        </authorList>
    </citation>
    <scope>NUCLEOTIDE SEQUENCE [LARGE SCALE GENOMIC DNA]</scope>
    <source>
        <strain>cv. Columbia</strain>
    </source>
</reference>
<reference key="2">
    <citation type="journal article" date="2000" name="Nature">
        <title>Sequence and analysis of chromosome 3 of the plant Arabidopsis thaliana.</title>
        <authorList>
            <person name="Salanoubat M."/>
            <person name="Lemcke K."/>
            <person name="Rieger M."/>
            <person name="Ansorge W."/>
            <person name="Unseld M."/>
            <person name="Fartmann B."/>
            <person name="Valle G."/>
            <person name="Bloecker H."/>
            <person name="Perez-Alonso M."/>
            <person name="Obermaier B."/>
            <person name="Delseny M."/>
            <person name="Boutry M."/>
            <person name="Grivell L.A."/>
            <person name="Mache R."/>
            <person name="Puigdomenech P."/>
            <person name="De Simone V."/>
            <person name="Choisne N."/>
            <person name="Artiguenave F."/>
            <person name="Robert C."/>
            <person name="Brottier P."/>
            <person name="Wincker P."/>
            <person name="Cattolico L."/>
            <person name="Weissenbach J."/>
            <person name="Saurin W."/>
            <person name="Quetier F."/>
            <person name="Schaefer M."/>
            <person name="Mueller-Auer S."/>
            <person name="Gabel C."/>
            <person name="Fuchs M."/>
            <person name="Benes V."/>
            <person name="Wurmbach E."/>
            <person name="Drzonek H."/>
            <person name="Erfle H."/>
            <person name="Jordan N."/>
            <person name="Bangert S."/>
            <person name="Wiedelmann R."/>
            <person name="Kranz H."/>
            <person name="Voss H."/>
            <person name="Holland R."/>
            <person name="Brandt P."/>
            <person name="Nyakatura G."/>
            <person name="Vezzi A."/>
            <person name="D'Angelo M."/>
            <person name="Pallavicini A."/>
            <person name="Toppo S."/>
            <person name="Simionati B."/>
            <person name="Conrad A."/>
            <person name="Hornischer K."/>
            <person name="Kauer G."/>
            <person name="Loehnert T.-H."/>
            <person name="Nordsiek G."/>
            <person name="Reichelt J."/>
            <person name="Scharfe M."/>
            <person name="Schoen O."/>
            <person name="Bargues M."/>
            <person name="Terol J."/>
            <person name="Climent J."/>
            <person name="Navarro P."/>
            <person name="Collado C."/>
            <person name="Perez-Perez A."/>
            <person name="Ottenwaelder B."/>
            <person name="Duchemin D."/>
            <person name="Cooke R."/>
            <person name="Laudie M."/>
            <person name="Berger-Llauro C."/>
            <person name="Purnelle B."/>
            <person name="Masuy D."/>
            <person name="de Haan M."/>
            <person name="Maarse A.C."/>
            <person name="Alcaraz J.-P."/>
            <person name="Cottet A."/>
            <person name="Casacuberta E."/>
            <person name="Monfort A."/>
            <person name="Argiriou A."/>
            <person name="Flores M."/>
            <person name="Liguori R."/>
            <person name="Vitale D."/>
            <person name="Mannhaupt G."/>
            <person name="Haase D."/>
            <person name="Schoof H."/>
            <person name="Rudd S."/>
            <person name="Zaccaria P."/>
            <person name="Mewes H.-W."/>
            <person name="Mayer K.F.X."/>
            <person name="Kaul S."/>
            <person name="Town C.D."/>
            <person name="Koo H.L."/>
            <person name="Tallon L.J."/>
            <person name="Jenkins J."/>
            <person name="Rooney T."/>
            <person name="Rizzo M."/>
            <person name="Walts A."/>
            <person name="Utterback T."/>
            <person name="Fujii C.Y."/>
            <person name="Shea T.P."/>
            <person name="Creasy T.H."/>
            <person name="Haas B."/>
            <person name="Maiti R."/>
            <person name="Wu D."/>
            <person name="Peterson J."/>
            <person name="Van Aken S."/>
            <person name="Pai G."/>
            <person name="Militscher J."/>
            <person name="Sellers P."/>
            <person name="Gill J.E."/>
            <person name="Feldblyum T.V."/>
            <person name="Preuss D."/>
            <person name="Lin X."/>
            <person name="Nierman W.C."/>
            <person name="Salzberg S.L."/>
            <person name="White O."/>
            <person name="Venter J.C."/>
            <person name="Fraser C.M."/>
            <person name="Kaneko T."/>
            <person name="Nakamura Y."/>
            <person name="Sato S."/>
            <person name="Kato T."/>
            <person name="Asamizu E."/>
            <person name="Sasamoto S."/>
            <person name="Kimura T."/>
            <person name="Idesawa K."/>
            <person name="Kawashima K."/>
            <person name="Kishida Y."/>
            <person name="Kiyokawa C."/>
            <person name="Kohara M."/>
            <person name="Matsumoto M."/>
            <person name="Matsuno A."/>
            <person name="Muraki A."/>
            <person name="Nakayama S."/>
            <person name="Nakazaki N."/>
            <person name="Shinpo S."/>
            <person name="Takeuchi C."/>
            <person name="Wada T."/>
            <person name="Watanabe A."/>
            <person name="Yamada M."/>
            <person name="Yasuda M."/>
            <person name="Tabata S."/>
        </authorList>
    </citation>
    <scope>NUCLEOTIDE SEQUENCE [LARGE SCALE GENOMIC DNA]</scope>
    <source>
        <strain>cv. Columbia</strain>
    </source>
</reference>
<reference key="3">
    <citation type="journal article" date="2017" name="Plant J.">
        <title>Araport11: a complete reannotation of the Arabidopsis thaliana reference genome.</title>
        <authorList>
            <person name="Cheng C.Y."/>
            <person name="Krishnakumar V."/>
            <person name="Chan A.P."/>
            <person name="Thibaud-Nissen F."/>
            <person name="Schobel S."/>
            <person name="Town C.D."/>
        </authorList>
    </citation>
    <scope>GENOME REANNOTATION</scope>
    <source>
        <strain>cv. Columbia</strain>
    </source>
</reference>
<reference key="4">
    <citation type="submission" date="2006-04" db="EMBL/GenBank/DDBJ databases">
        <title>Arabidopsis ORF clones.</title>
        <authorList>
            <person name="Shinn P."/>
            <person name="Chen H."/>
            <person name="Kim C.J."/>
            <person name="Ecker J.R."/>
        </authorList>
    </citation>
    <scope>NUCLEOTIDE SEQUENCE [LARGE SCALE MRNA]</scope>
    <source>
        <strain>cv. Columbia</strain>
    </source>
</reference>
<reference key="5">
    <citation type="submission" date="2006-07" db="EMBL/GenBank/DDBJ databases">
        <title>Large-scale analysis of RIKEN Arabidopsis full-length (RAFL) cDNAs.</title>
        <authorList>
            <person name="Totoki Y."/>
            <person name="Seki M."/>
            <person name="Ishida J."/>
            <person name="Nakajima M."/>
            <person name="Enju A."/>
            <person name="Kamiya A."/>
            <person name="Narusaka M."/>
            <person name="Shin-i T."/>
            <person name="Nakagawa M."/>
            <person name="Sakamoto N."/>
            <person name="Oishi K."/>
            <person name="Kohara Y."/>
            <person name="Kobayashi M."/>
            <person name="Toyoda A."/>
            <person name="Sakaki Y."/>
            <person name="Sakurai T."/>
            <person name="Iida K."/>
            <person name="Akiyama K."/>
            <person name="Satou M."/>
            <person name="Toyoda T."/>
            <person name="Konagaya A."/>
            <person name="Carninci P."/>
            <person name="Kawai J."/>
            <person name="Hayashizaki Y."/>
            <person name="Shinozaki K."/>
        </authorList>
    </citation>
    <scope>NUCLEOTIDE SEQUENCE [LARGE SCALE MRNA]</scope>
    <source>
        <strain>cv. Columbia</strain>
    </source>
</reference>
<reference key="6">
    <citation type="submission" date="2002-03" db="EMBL/GenBank/DDBJ databases">
        <title>Full-length cDNA from Arabidopsis thaliana.</title>
        <authorList>
            <person name="Brover V.V."/>
            <person name="Troukhan M.E."/>
            <person name="Alexandrov N.A."/>
            <person name="Lu Y.-P."/>
            <person name="Flavell R.B."/>
            <person name="Feldmann K.A."/>
        </authorList>
    </citation>
    <scope>NUCLEOTIDE SEQUENCE [LARGE SCALE MRNA]</scope>
</reference>
<reference key="7">
    <citation type="journal article" date="2008" name="BMC Genomics">
        <title>Genome-wide analysis of CCCH zinc finger family in Arabidopsis and rice.</title>
        <authorList>
            <person name="Wang D."/>
            <person name="Guo Y."/>
            <person name="Wu C."/>
            <person name="Yang G."/>
            <person name="Li Y."/>
            <person name="Zheng C."/>
        </authorList>
    </citation>
    <scope>NOMENCLATURE</scope>
</reference>
<sequence length="248" mass="25952">MDTRKRGRPEAGSFNSNGGGYKKSKQEMESYSTGLGSKSKPCTKFFSTSGCPFGENCHFLHYVPGGYNAVSQMTNMGPPIPQVSRNMQGSGNGGRFSGRGESGPGHVSNFGDSATARFSVDASLAGAIIGKGGVSSKQICRQTGVKLSIQDHERDPNLKNIVLEGTLEQISEASAMVKDLIGRLNSAAKKPPGGGLGGGGGMGSEGKPHPGSNFKTKICERFSKGNCTFGDRCHFAHGEAELRKSGIV</sequence>
<proteinExistence type="evidence at transcript level"/>
<comment type="sequence caution" evidence="4">
    <conflict type="erroneous gene model prediction">
        <sequence resource="EMBL-CDS" id="BAB01961"/>
    </conflict>
</comment>
<dbReference type="EMBL" id="AP002063">
    <property type="protein sequence ID" value="BAB01961.1"/>
    <property type="status" value="ALT_SEQ"/>
    <property type="molecule type" value="Genomic_DNA"/>
</dbReference>
<dbReference type="EMBL" id="AC069473">
    <property type="protein sequence ID" value="AAG51040.1"/>
    <property type="molecule type" value="Genomic_DNA"/>
</dbReference>
<dbReference type="EMBL" id="CP002686">
    <property type="protein sequence ID" value="AEE75154.1"/>
    <property type="molecule type" value="Genomic_DNA"/>
</dbReference>
<dbReference type="EMBL" id="BT025032">
    <property type="protein sequence ID" value="ABE02407.1"/>
    <property type="molecule type" value="mRNA"/>
</dbReference>
<dbReference type="EMBL" id="AK227373">
    <property type="protein sequence ID" value="BAE99380.1"/>
    <property type="molecule type" value="mRNA"/>
</dbReference>
<dbReference type="EMBL" id="AY085746">
    <property type="protein sequence ID" value="AAM62964.1"/>
    <property type="molecule type" value="mRNA"/>
</dbReference>
<dbReference type="RefSeq" id="NP_566412.1">
    <property type="nucleotide sequence ID" value="NM_112048.4"/>
</dbReference>
<dbReference type="SMR" id="Q9C7C3"/>
<dbReference type="BioGRID" id="5722">
    <property type="interactions" value="8"/>
</dbReference>
<dbReference type="FunCoup" id="Q9C7C3">
    <property type="interactions" value="2909"/>
</dbReference>
<dbReference type="IntAct" id="Q9C7C3">
    <property type="interactions" value="8"/>
</dbReference>
<dbReference type="STRING" id="3702.Q9C7C3"/>
<dbReference type="iPTMnet" id="Q9C7C3"/>
<dbReference type="MetOSite" id="Q9C7C3"/>
<dbReference type="PaxDb" id="3702-AT3G12130.1"/>
<dbReference type="ProteomicsDB" id="240521"/>
<dbReference type="EnsemblPlants" id="AT3G12130.1">
    <property type="protein sequence ID" value="AT3G12130.1"/>
    <property type="gene ID" value="AT3G12130"/>
</dbReference>
<dbReference type="GeneID" id="820388"/>
<dbReference type="Gramene" id="AT3G12130.1">
    <property type="protein sequence ID" value="AT3G12130.1"/>
    <property type="gene ID" value="AT3G12130"/>
</dbReference>
<dbReference type="KEGG" id="ath:AT3G12130"/>
<dbReference type="Araport" id="AT3G12130"/>
<dbReference type="TAIR" id="AT3G12130">
    <property type="gene designation" value="KHZ1"/>
</dbReference>
<dbReference type="eggNOG" id="KOG1677">
    <property type="taxonomic scope" value="Eukaryota"/>
</dbReference>
<dbReference type="HOGENOM" id="CLU_045191_2_0_1"/>
<dbReference type="InParanoid" id="Q9C7C3"/>
<dbReference type="OMA" id="RFAKGNC"/>
<dbReference type="OrthoDB" id="410307at2759"/>
<dbReference type="PhylomeDB" id="Q9C7C3"/>
<dbReference type="PRO" id="PR:Q9C7C3"/>
<dbReference type="Proteomes" id="UP000006548">
    <property type="component" value="Chromosome 3"/>
</dbReference>
<dbReference type="ExpressionAtlas" id="Q9C7C3">
    <property type="expression patterns" value="baseline and differential"/>
</dbReference>
<dbReference type="GO" id="GO:0005634">
    <property type="term" value="C:nucleus"/>
    <property type="evidence" value="ECO:0000314"/>
    <property type="project" value="TAIR"/>
</dbReference>
<dbReference type="GO" id="GO:0003677">
    <property type="term" value="F:DNA binding"/>
    <property type="evidence" value="ECO:0007669"/>
    <property type="project" value="UniProtKB-KW"/>
</dbReference>
<dbReference type="GO" id="GO:0003700">
    <property type="term" value="F:DNA-binding transcription factor activity"/>
    <property type="evidence" value="ECO:0000250"/>
    <property type="project" value="TAIR"/>
</dbReference>
<dbReference type="GO" id="GO:0003729">
    <property type="term" value="F:mRNA binding"/>
    <property type="evidence" value="ECO:0007669"/>
    <property type="project" value="InterPro"/>
</dbReference>
<dbReference type="GO" id="GO:0003723">
    <property type="term" value="F:RNA binding"/>
    <property type="evidence" value="ECO:0000314"/>
    <property type="project" value="TAIR"/>
</dbReference>
<dbReference type="GO" id="GO:0008270">
    <property type="term" value="F:zinc ion binding"/>
    <property type="evidence" value="ECO:0007669"/>
    <property type="project" value="UniProtKB-KW"/>
</dbReference>
<dbReference type="GO" id="GO:1900057">
    <property type="term" value="P:positive regulation of leaf senescence"/>
    <property type="evidence" value="ECO:0000315"/>
    <property type="project" value="TAIR"/>
</dbReference>
<dbReference type="GO" id="GO:0006355">
    <property type="term" value="P:regulation of DNA-templated transcription"/>
    <property type="evidence" value="ECO:0000304"/>
    <property type="project" value="TAIR"/>
</dbReference>
<dbReference type="GO" id="GO:2000028">
    <property type="term" value="P:regulation of photoperiodism, flowering"/>
    <property type="evidence" value="ECO:0000316"/>
    <property type="project" value="TAIR"/>
</dbReference>
<dbReference type="CDD" id="cd22464">
    <property type="entry name" value="KH-I_AtC3H36_like"/>
    <property type="match status" value="1"/>
</dbReference>
<dbReference type="FunFam" id="4.10.1000.10:FF:000003">
    <property type="entry name" value="Zinc finger CCCH domain-containing protein"/>
    <property type="match status" value="1"/>
</dbReference>
<dbReference type="FunFam" id="3.30.1370.10:FF:000069">
    <property type="entry name" value="Zinc finger CCCH domain-containing protein 52"/>
    <property type="match status" value="1"/>
</dbReference>
<dbReference type="Gene3D" id="3.30.1370.10">
    <property type="entry name" value="K Homology domain, type 1"/>
    <property type="match status" value="1"/>
</dbReference>
<dbReference type="Gene3D" id="4.10.1000.10">
    <property type="entry name" value="Zinc finger, CCCH-type"/>
    <property type="match status" value="1"/>
</dbReference>
<dbReference type="InterPro" id="IPR004087">
    <property type="entry name" value="KH_dom"/>
</dbReference>
<dbReference type="InterPro" id="IPR004088">
    <property type="entry name" value="KH_dom_type_1"/>
</dbReference>
<dbReference type="InterPro" id="IPR036612">
    <property type="entry name" value="KH_dom_type_1_sf"/>
</dbReference>
<dbReference type="InterPro" id="IPR045877">
    <property type="entry name" value="ZFP36-like"/>
</dbReference>
<dbReference type="InterPro" id="IPR000571">
    <property type="entry name" value="Znf_CCCH"/>
</dbReference>
<dbReference type="InterPro" id="IPR036855">
    <property type="entry name" value="Znf_CCCH_sf"/>
</dbReference>
<dbReference type="PANTHER" id="PTHR12547">
    <property type="entry name" value="CCCH ZINC FINGER/TIS11-RELATED"/>
    <property type="match status" value="1"/>
</dbReference>
<dbReference type="Pfam" id="PF00013">
    <property type="entry name" value="KH_1"/>
    <property type="match status" value="1"/>
</dbReference>
<dbReference type="Pfam" id="PF00642">
    <property type="entry name" value="zf-CCCH"/>
    <property type="match status" value="1"/>
</dbReference>
<dbReference type="Pfam" id="PF14608">
    <property type="entry name" value="zf-CCCH_2"/>
    <property type="match status" value="1"/>
</dbReference>
<dbReference type="SMART" id="SM00322">
    <property type="entry name" value="KH"/>
    <property type="match status" value="1"/>
</dbReference>
<dbReference type="SMART" id="SM00356">
    <property type="entry name" value="ZnF_C3H1"/>
    <property type="match status" value="2"/>
</dbReference>
<dbReference type="SUPFAM" id="SSF90229">
    <property type="entry name" value="CCCH zinc finger"/>
    <property type="match status" value="2"/>
</dbReference>
<dbReference type="SUPFAM" id="SSF54791">
    <property type="entry name" value="Eukaryotic type KH-domain (KH-domain type I)"/>
    <property type="match status" value="1"/>
</dbReference>
<dbReference type="PROSITE" id="PS50084">
    <property type="entry name" value="KH_TYPE_1"/>
    <property type="match status" value="1"/>
</dbReference>
<dbReference type="PROSITE" id="PS50103">
    <property type="entry name" value="ZF_C3H1"/>
    <property type="match status" value="2"/>
</dbReference>
<organism>
    <name type="scientific">Arabidopsis thaliana</name>
    <name type="common">Mouse-ear cress</name>
    <dbReference type="NCBI Taxonomy" id="3702"/>
    <lineage>
        <taxon>Eukaryota</taxon>
        <taxon>Viridiplantae</taxon>
        <taxon>Streptophyta</taxon>
        <taxon>Embryophyta</taxon>
        <taxon>Tracheophyta</taxon>
        <taxon>Spermatophyta</taxon>
        <taxon>Magnoliopsida</taxon>
        <taxon>eudicotyledons</taxon>
        <taxon>Gunneridae</taxon>
        <taxon>Pentapetalae</taxon>
        <taxon>rosids</taxon>
        <taxon>malvids</taxon>
        <taxon>Brassicales</taxon>
        <taxon>Brassicaceae</taxon>
        <taxon>Camelineae</taxon>
        <taxon>Arabidopsis</taxon>
    </lineage>
</organism>
<protein>
    <recommendedName>
        <fullName>Zinc finger CCCH domain-containing protein 36</fullName>
        <shortName>AtC3H36</shortName>
    </recommendedName>
</protein>
<gene>
    <name type="ordered locus">At3g12130</name>
    <name type="ORF">T21B14.5</name>
</gene>
<accession>Q9C7C3</accession>
<accession>Q9LH55</accession>
<keyword id="KW-0238">DNA-binding</keyword>
<keyword id="KW-0479">Metal-binding</keyword>
<keyword id="KW-1185">Reference proteome</keyword>
<keyword id="KW-0677">Repeat</keyword>
<keyword id="KW-0694">RNA-binding</keyword>
<keyword id="KW-0862">Zinc</keyword>
<keyword id="KW-0863">Zinc-finger</keyword>
<name>C3H36_ARATH</name>
<feature type="chain" id="PRO_0000371991" description="Zinc finger CCCH domain-containing protein 36">
    <location>
        <begin position="1"/>
        <end position="248"/>
    </location>
</feature>
<feature type="domain" description="KH" evidence="1">
    <location>
        <begin position="113"/>
        <end position="177"/>
    </location>
</feature>
<feature type="zinc finger region" description="C3H1-type 1" evidence="2">
    <location>
        <begin position="36"/>
        <end position="64"/>
    </location>
</feature>
<feature type="zinc finger region" description="C3H1-type 2" evidence="2">
    <location>
        <begin position="213"/>
        <end position="240"/>
    </location>
</feature>
<feature type="region of interest" description="Disordered" evidence="3">
    <location>
        <begin position="1"/>
        <end position="37"/>
    </location>
</feature>
<feature type="region of interest" description="Disordered" evidence="3">
    <location>
        <begin position="87"/>
        <end position="110"/>
    </location>
</feature>
<feature type="region of interest" description="Disordered" evidence="3">
    <location>
        <begin position="188"/>
        <end position="209"/>
    </location>
</feature>
<feature type="compositionally biased region" description="Gly residues" evidence="3">
    <location>
        <begin position="90"/>
        <end position="103"/>
    </location>
</feature>
<feature type="compositionally biased region" description="Gly residues" evidence="3">
    <location>
        <begin position="192"/>
        <end position="204"/>
    </location>
</feature>